<gene>
    <name evidence="11" type="primary">daf-7</name>
    <name evidence="11" type="ORF">B0412.2</name>
</gene>
<evidence type="ECO:0000250" key="1"/>
<evidence type="ECO:0000255" key="2"/>
<evidence type="ECO:0000269" key="3">
    <source>
    </source>
</evidence>
<evidence type="ECO:0000269" key="4">
    <source>
    </source>
</evidence>
<evidence type="ECO:0000269" key="5">
    <source>
    </source>
</evidence>
<evidence type="ECO:0000269" key="6">
    <source>
    </source>
</evidence>
<evidence type="ECO:0000269" key="7">
    <source>
    </source>
</evidence>
<evidence type="ECO:0000269" key="8">
    <source>
    </source>
</evidence>
<evidence type="ECO:0000269" key="9">
    <source>
    </source>
</evidence>
<evidence type="ECO:0000305" key="10"/>
<evidence type="ECO:0000312" key="11">
    <source>
        <dbReference type="WormBase" id="B0412.2"/>
    </source>
</evidence>
<sequence>MFMASSLPVFIFLLSLPHGLTFNCTNSGVCIEKMKQHRTEYLKNEILDQLNMKEAPKGLKPMDPEMKSVYLEMYRDLLEKDEQDMGVEMSFYTAKDPSYGENPSQLVAKFDVTNDLERSDILQATLTVSIEIPAKDSGMLQDVQVQVYEKNEDGSMGEMVTSGIFATKGSERISIQLPIDTVKSWFTISPIQGIFVKAMLDGRNVALHPQQTTADVDNMRLQLSTRPKGSRKRRSHAKPVCNAEAQSKGCCLYDLEIEFEKIGWDWIVAPPRYNAYMCRGDCHYNAHHFNLAETGHSKIMRAAHKVSNPEIGYCCHPTEYDYIKLIYVNRDGRVSIANVNGMIAKKCGCS</sequence>
<reference key="1">
    <citation type="journal article" date="1996" name="Science">
        <title>Control of C. elegans larval development by neuronal expression of a TGF-beta homolog.</title>
        <authorList>
            <person name="Ren P."/>
            <person name="Lim C.-S."/>
            <person name="Johnsen R."/>
            <person name="Albert P.S."/>
            <person name="Pilgrim D."/>
            <person name="Riddle D.L."/>
        </authorList>
    </citation>
    <scope>NUCLEOTIDE SEQUENCE [GENOMIC DNA / MRNA]</scope>
    <scope>FUNCTION</scope>
    <scope>TISSUE SPECIFICITY</scope>
    <scope>DEVELOPMENTAL STAGE</scope>
    <scope>INDUCTION</scope>
    <scope>MUTAGENESIS OF PRO-271 AND GLY-280</scope>
    <source>
        <strain>Bristol N2</strain>
    </source>
</reference>
<reference key="2">
    <citation type="journal article" date="1998" name="Science">
        <title>Genome sequence of the nematode C. elegans: a platform for investigating biology.</title>
        <authorList>
            <consortium name="The C. elegans sequencing consortium"/>
        </authorList>
    </citation>
    <scope>NUCLEOTIDE SEQUENCE [LARGE SCALE GENOMIC DNA]</scope>
    <source>
        <strain>Bristol N2</strain>
    </source>
</reference>
<reference key="3">
    <citation type="journal article" date="1993" name="Nature">
        <title>The daf-4 gene encodes a bone morphogenetic protein receptor controlling C. elegans dauer larva development.</title>
        <authorList>
            <person name="Estevez M."/>
            <person name="Attisano L."/>
            <person name="Wrana J.L."/>
            <person name="Albert P.S."/>
            <person name="Massague J."/>
            <person name="Riddle D.L."/>
        </authorList>
    </citation>
    <scope>FUNCTION</scope>
</reference>
<reference key="4">
    <citation type="journal article" date="2008" name="Proc. Natl. Acad. Sci. U.S.A.">
        <title>Acute carbon dioxide avoidance in Caenorhabditis elegans.</title>
        <authorList>
            <person name="Hallem E.A."/>
            <person name="Sternberg P.W."/>
        </authorList>
    </citation>
    <scope>FUNCTION</scope>
</reference>
<reference key="5">
    <citation type="journal article" date="2010" name="Genes Dev.">
        <title>The homeodomain protein hmbx-1 maintains asymmetric gene expression in adult C. elegans olfactory neurons.</title>
        <authorList>
            <person name="Lesch B.J."/>
            <person name="Bargmann C.I."/>
        </authorList>
    </citation>
    <scope>FUNCTION</scope>
    <scope>MUTAGENESIS OF 105-GLN--SER-350</scope>
</reference>
<reference key="6">
    <citation type="journal article" date="2018" name="Elife">
        <title>PDF-1 neuropeptide signaling regulates sexually dimorphic gene expression in shared sensory neurons of C. elegans.</title>
        <authorList>
            <person name="Hilbert Z.A."/>
            <person name="Kim D.H."/>
        </authorList>
    </citation>
    <scope>FUNCTION</scope>
    <scope>TISSUE SPECIFICITY</scope>
    <scope>DEVELOPMENTAL STAGE</scope>
</reference>
<reference key="7">
    <citation type="journal article" date="2019" name="Elife">
        <title>The Makorin lep-2 and the lncRNA lep-5 regulate lin-28 to schedule sexual maturation of the C. elegans nervous system.</title>
        <authorList>
            <person name="Lawson H."/>
            <person name="Vuong E."/>
            <person name="Miller R.M."/>
            <person name="Kiontke K."/>
            <person name="Fitch D.H."/>
            <person name="Portman D.S."/>
        </authorList>
    </citation>
    <scope>TISSUE SPECIFICITY</scope>
    <scope>DEVELOPMENTAL STAGE</scope>
</reference>
<reference evidence="10" key="8">
    <citation type="journal article" date="2023" name="Biochem. Biophys. Res. Commun.">
        <title>The G protein-coupled receptor neuropeptide receptor-15 modulates larval development via the transforming growth factor-beta DAF-7 protein in Caenorhabditis elegans.</title>
        <authorList>
            <person name="Ono M."/>
            <person name="Matsushita K."/>
            <person name="Maega S."/>
            <person name="Asano N."/>
            <person name="Matsunaga Y."/>
            <person name="Bito T."/>
            <person name="Iwasaki T."/>
            <person name="Kawano T."/>
        </authorList>
    </citation>
    <scope>FUNCTION</scope>
    <scope>TISSUE SPECIFICITY</scope>
    <scope>DEVELOPMENTAL STAGE</scope>
</reference>
<name>DAF7_CAEEL</name>
<feature type="signal peptide" evidence="2">
    <location>
        <begin position="1"/>
        <end position="21"/>
    </location>
</feature>
<feature type="propeptide" id="PRO_0000033674" evidence="2">
    <location>
        <begin position="22"/>
        <end position="234"/>
    </location>
</feature>
<feature type="chain" id="PRO_0000033675" description="Dauer larva development regulatory growth factor daf-7">
    <location>
        <begin position="235"/>
        <end position="350"/>
    </location>
</feature>
<feature type="glycosylation site" description="N-linked (GlcNAc...) asparagine" evidence="2">
    <location>
        <position position="23"/>
    </location>
</feature>
<feature type="disulfide bond" evidence="1">
    <location>
        <begin position="241"/>
        <end position="251"/>
    </location>
</feature>
<feature type="disulfide bond" evidence="1">
    <location>
        <begin position="250"/>
        <end position="315"/>
    </location>
</feature>
<feature type="disulfide bond" evidence="1">
    <location>
        <begin position="278"/>
        <end position="347"/>
    </location>
</feature>
<feature type="disulfide bond" evidence="1">
    <location>
        <begin position="282"/>
        <end position="349"/>
    </location>
</feature>
<feature type="disulfide bond" description="Interchain" evidence="1">
    <location>
        <position position="314"/>
    </location>
</feature>
<feature type="mutagenesis site" description="In ky771; reduces expression of the G protein-coupled receptor (GPCR) srsx-3 in the AWC neuron." evidence="4">
    <location>
        <begin position="105"/>
        <end position="350"/>
    </location>
</feature>
<feature type="mutagenesis site" description="In E1372; loss of function." evidence="9">
    <original>P</original>
    <variation>S</variation>
    <location>
        <position position="271"/>
    </location>
</feature>
<feature type="mutagenesis site" description="In M70; loss of function." evidence="9">
    <original>G</original>
    <variation>R</variation>
    <location>
        <position position="280"/>
    </location>
</feature>
<keyword id="KW-0165">Cleavage on pair of basic residues</keyword>
<keyword id="KW-0217">Developmental protein</keyword>
<keyword id="KW-1015">Disulfide bond</keyword>
<keyword id="KW-0325">Glycoprotein</keyword>
<keyword id="KW-0339">Growth factor</keyword>
<keyword id="KW-1185">Reference proteome</keyword>
<keyword id="KW-0964">Secreted</keyword>
<keyword id="KW-0732">Signal</keyword>
<protein>
    <recommendedName>
        <fullName>Dauer larva development regulatory growth factor daf-7</fullName>
    </recommendedName>
    <alternativeName>
        <fullName>Abnormal dauer formation protein 7</fullName>
    </alternativeName>
</protein>
<organism>
    <name type="scientific">Caenorhabditis elegans</name>
    <dbReference type="NCBI Taxonomy" id="6239"/>
    <lineage>
        <taxon>Eukaryota</taxon>
        <taxon>Metazoa</taxon>
        <taxon>Ecdysozoa</taxon>
        <taxon>Nematoda</taxon>
        <taxon>Chromadorea</taxon>
        <taxon>Rhabditida</taxon>
        <taxon>Rhabditina</taxon>
        <taxon>Rhabditomorpha</taxon>
        <taxon>Rhabditoidea</taxon>
        <taxon>Rhabditidae</taxon>
        <taxon>Peloderinae</taxon>
        <taxon>Caenorhabditis</taxon>
    </lineage>
</organism>
<comment type="function">
    <text evidence="3 4 5 7 8 9">Under harsh environmental conditions, larvae enter a developmentally arrested state known as dauer; TGF-beta-like daf-7 acts to inhibit dauer larva formation and promote growth (PubMed:37060828, PubMed:8910282). May be a ligand to cell surface receptor daf-4 (PubMed:8413626). May act as a negative regulator of dauer larva development by transducing chemosensory information from ASI neurons (PubMed:8910282). Involved in sensitivity to CO2 levels (PubMed:18524955). Involved in mate searching behavior of males, acting in concert with the neuropeptide pdf-1 (PubMed:30024377). In AWC neurons, acts to promote expression of srsx-3, a member of the GPCR family (PubMed:20713521).</text>
</comment>
<comment type="subcellular location">
    <subcellularLocation>
        <location evidence="1">Secreted</location>
    </subcellularLocation>
</comment>
<comment type="tissue specificity">
    <text evidence="5 6 7 9">Expressed in the chemosensory neurons, including in the ASJ neurons in males. Expressed in the ASI neurons (PubMed:37060828).</text>
</comment>
<comment type="developmental stage">
    <text evidence="5 7 9">When the food/pheromone ratio is high, its level peaks during the L1 larval stage (PubMed:8910282). Expression is detected in larvae beginning 4 to 5 hours after hatching, through the four larval stages, and in adults (PubMed:8910282). Expressed in ASJ chemosensory neurons in males from the L4 larval stage (PubMed:31264582). Expressed in ASI neurons during L2 larval development (PubMed:37060828).</text>
</comment>
<comment type="induction">
    <text evidence="9">Dauer-inducing pheromone inhibits its expression and promotes dauer formation, whereas food reactivates its expression and promotes recovery from the dauer state.</text>
</comment>
<comment type="similarity">
    <text evidence="10">Belongs to the TGF-beta family.</text>
</comment>
<accession>P92172</accession>
<dbReference type="EMBL" id="U72883">
    <property type="protein sequence ID" value="AAC47390.1"/>
    <property type="molecule type" value="mRNA"/>
</dbReference>
<dbReference type="EMBL" id="U72884">
    <property type="protein sequence ID" value="AAC47389.1"/>
    <property type="molecule type" value="Genomic_DNA"/>
</dbReference>
<dbReference type="EMBL" id="BX284603">
    <property type="protein sequence ID" value="CCD61866.1"/>
    <property type="molecule type" value="Genomic_DNA"/>
</dbReference>
<dbReference type="PIR" id="T25451">
    <property type="entry name" value="T25451"/>
</dbReference>
<dbReference type="RefSeq" id="NP_497265.1">
    <property type="nucleotide sequence ID" value="NM_064864.6"/>
</dbReference>
<dbReference type="BioGRID" id="40506">
    <property type="interactions" value="1"/>
</dbReference>
<dbReference type="FunCoup" id="P92172">
    <property type="interactions" value="1044"/>
</dbReference>
<dbReference type="STRING" id="6239.B0412.2.1"/>
<dbReference type="GlyCosmos" id="P92172">
    <property type="glycosylation" value="1 site, No reported glycans"/>
</dbReference>
<dbReference type="PaxDb" id="6239-B0412.2"/>
<dbReference type="PeptideAtlas" id="P92172"/>
<dbReference type="EnsemblMetazoa" id="B0412.2.1">
    <property type="protein sequence ID" value="B0412.2.1"/>
    <property type="gene ID" value="WBGene00000903"/>
</dbReference>
<dbReference type="GeneID" id="175237"/>
<dbReference type="KEGG" id="cel:CELE_B0412.2"/>
<dbReference type="UCSC" id="B0412.2">
    <property type="organism name" value="c. elegans"/>
</dbReference>
<dbReference type="AGR" id="WB:WBGene00000903"/>
<dbReference type="CTD" id="175237"/>
<dbReference type="WormBase" id="B0412.2">
    <property type="protein sequence ID" value="CE01758"/>
    <property type="gene ID" value="WBGene00000903"/>
    <property type="gene designation" value="daf-7"/>
</dbReference>
<dbReference type="eggNOG" id="KOG3900">
    <property type="taxonomic scope" value="Eukaryota"/>
</dbReference>
<dbReference type="HOGENOM" id="CLU_020515_6_0_1"/>
<dbReference type="InParanoid" id="P92172"/>
<dbReference type="OMA" id="CNACMWR"/>
<dbReference type="OrthoDB" id="5948587at2759"/>
<dbReference type="PhylomeDB" id="P92172"/>
<dbReference type="Reactome" id="R-CEL-114608">
    <property type="pathway name" value="Platelet degranulation"/>
</dbReference>
<dbReference type="Reactome" id="R-CEL-201451">
    <property type="pathway name" value="Signaling by BMP"/>
</dbReference>
<dbReference type="Reactome" id="R-CEL-2129379">
    <property type="pathway name" value="Molecules associated with elastic fibres"/>
</dbReference>
<dbReference type="Reactome" id="R-CEL-2173788">
    <property type="pathway name" value="Downregulation of TGF-beta receptor signaling"/>
</dbReference>
<dbReference type="Reactome" id="R-CEL-2173789">
    <property type="pathway name" value="TGF-beta receptor signaling activates SMADs"/>
</dbReference>
<dbReference type="Reactome" id="R-CEL-2173791">
    <property type="pathway name" value="TGF-beta receptor signaling in EMT (epithelial to mesenchymal transition)"/>
</dbReference>
<dbReference type="Reactome" id="R-CEL-3000170">
    <property type="pathway name" value="Syndecan interactions"/>
</dbReference>
<dbReference type="Reactome" id="R-CEL-381426">
    <property type="pathway name" value="Regulation of Insulin-like Growth Factor (IGF) transport and uptake by Insulin-like Growth Factor Binding Proteins (IGFBPs)"/>
</dbReference>
<dbReference type="Reactome" id="R-CEL-8941855">
    <property type="pathway name" value="RUNX3 regulates CDKN1A transcription"/>
</dbReference>
<dbReference type="Reactome" id="R-CEL-8941858">
    <property type="pathway name" value="Regulation of RUNX3 expression and activity"/>
</dbReference>
<dbReference type="Reactome" id="R-CEL-8951936">
    <property type="pathway name" value="RUNX3 regulates p14-ARF"/>
</dbReference>
<dbReference type="Reactome" id="R-CEL-8957275">
    <property type="pathway name" value="Post-translational protein phosphorylation"/>
</dbReference>
<dbReference type="Reactome" id="R-CEL-9839389">
    <property type="pathway name" value="TGFBR3 regulates TGF-beta signaling"/>
</dbReference>
<dbReference type="SignaLink" id="P92172"/>
<dbReference type="PRO" id="PR:P92172"/>
<dbReference type="Proteomes" id="UP000001940">
    <property type="component" value="Chromosome III"/>
</dbReference>
<dbReference type="Bgee" id="WBGene00000903">
    <property type="expression patterns" value="Expressed in sensory neuron and 24 other cell types or tissues"/>
</dbReference>
<dbReference type="GO" id="GO:0005615">
    <property type="term" value="C:extracellular space"/>
    <property type="evidence" value="ECO:0000314"/>
    <property type="project" value="WormBase"/>
</dbReference>
<dbReference type="GO" id="GO:0005125">
    <property type="term" value="F:cytokine activity"/>
    <property type="evidence" value="ECO:0000318"/>
    <property type="project" value="GO_Central"/>
</dbReference>
<dbReference type="GO" id="GO:0008083">
    <property type="term" value="F:growth factor activity"/>
    <property type="evidence" value="ECO:0007669"/>
    <property type="project" value="UniProtKB-KW"/>
</dbReference>
<dbReference type="GO" id="GO:0005160">
    <property type="term" value="F:transforming growth factor beta receptor binding"/>
    <property type="evidence" value="ECO:0000250"/>
    <property type="project" value="WormBase"/>
</dbReference>
<dbReference type="GO" id="GO:0071321">
    <property type="term" value="P:cellular response to cGMP"/>
    <property type="evidence" value="ECO:0000315"/>
    <property type="project" value="UniProtKB"/>
</dbReference>
<dbReference type="GO" id="GO:0071444">
    <property type="term" value="P:cellular response to pheromone"/>
    <property type="evidence" value="ECO:0000316"/>
    <property type="project" value="UniProtKB"/>
</dbReference>
<dbReference type="GO" id="GO:0043053">
    <property type="term" value="P:dauer entry"/>
    <property type="evidence" value="ECO:0000316"/>
    <property type="project" value="UniProtKB"/>
</dbReference>
<dbReference type="GO" id="GO:0040024">
    <property type="term" value="P:dauer larval development"/>
    <property type="evidence" value="ECO:0000315"/>
    <property type="project" value="WormBase"/>
</dbReference>
<dbReference type="GO" id="GO:0050829">
    <property type="term" value="P:defense response to Gram-negative bacterium"/>
    <property type="evidence" value="ECO:0000315"/>
    <property type="project" value="WormBase"/>
</dbReference>
<dbReference type="GO" id="GO:0016045">
    <property type="term" value="P:detection of bacterium"/>
    <property type="evidence" value="ECO:0000315"/>
    <property type="project" value="UniProtKB"/>
</dbReference>
<dbReference type="GO" id="GO:0032490">
    <property type="term" value="P:detection of molecule of bacterial origin"/>
    <property type="evidence" value="ECO:0000315"/>
    <property type="project" value="UniProtKB"/>
</dbReference>
<dbReference type="GO" id="GO:0008340">
    <property type="term" value="P:determination of adult lifespan"/>
    <property type="evidence" value="ECO:0000315"/>
    <property type="project" value="WormBase"/>
</dbReference>
<dbReference type="GO" id="GO:0030536">
    <property type="term" value="P:larval feeding behavior"/>
    <property type="evidence" value="ECO:0000315"/>
    <property type="project" value="UniProtKB"/>
</dbReference>
<dbReference type="GO" id="GO:1905910">
    <property type="term" value="P:negative regulation of dauer entry"/>
    <property type="evidence" value="ECO:0000315"/>
    <property type="project" value="UniProtKB"/>
</dbReference>
<dbReference type="GO" id="GO:0061067">
    <property type="term" value="P:negative regulation of dauer larval development"/>
    <property type="evidence" value="ECO:0000315"/>
    <property type="project" value="WormBase"/>
</dbReference>
<dbReference type="GO" id="GO:0010629">
    <property type="term" value="P:negative regulation of gene expression"/>
    <property type="evidence" value="ECO:0000315"/>
    <property type="project" value="UniProtKB"/>
</dbReference>
<dbReference type="GO" id="GO:0010628">
    <property type="term" value="P:positive regulation of gene expression"/>
    <property type="evidence" value="ECO:0000315"/>
    <property type="project" value="UniProtKB"/>
</dbReference>
<dbReference type="GO" id="GO:0045944">
    <property type="term" value="P:positive regulation of transcription by RNA polymerase II"/>
    <property type="evidence" value="ECO:0000315"/>
    <property type="project" value="WormBase"/>
</dbReference>
<dbReference type="GO" id="GO:0061065">
    <property type="term" value="P:regulation of dauer larval development"/>
    <property type="evidence" value="ECO:0000315"/>
    <property type="project" value="UniProtKB"/>
</dbReference>
<dbReference type="GO" id="GO:1903998">
    <property type="term" value="P:regulation of eating behavior"/>
    <property type="evidence" value="ECO:0000315"/>
    <property type="project" value="UniProtKB"/>
</dbReference>
<dbReference type="GO" id="GO:0043051">
    <property type="term" value="P:regulation of nematode pharyngeal pumping"/>
    <property type="evidence" value="ECO:0000315"/>
    <property type="project" value="WormBase"/>
</dbReference>
<dbReference type="GO" id="GO:0009266">
    <property type="term" value="P:response to temperature stimulus"/>
    <property type="evidence" value="ECO:0000315"/>
    <property type="project" value="UniProtKB"/>
</dbReference>
<dbReference type="GO" id="GO:0007179">
    <property type="term" value="P:transforming growth factor beta receptor signaling pathway"/>
    <property type="evidence" value="ECO:0000250"/>
    <property type="project" value="WormBase"/>
</dbReference>
<dbReference type="CDD" id="cd19378">
    <property type="entry name" value="TGF_beta_DAF7"/>
    <property type="match status" value="1"/>
</dbReference>
<dbReference type="FunFam" id="2.10.90.10:FF:000012">
    <property type="entry name" value="Growth/differentiation factor 9 (Predicted)"/>
    <property type="match status" value="1"/>
</dbReference>
<dbReference type="Gene3D" id="2.60.120.970">
    <property type="match status" value="1"/>
</dbReference>
<dbReference type="Gene3D" id="2.10.90.10">
    <property type="entry name" value="Cystine-knot cytokines"/>
    <property type="match status" value="1"/>
</dbReference>
<dbReference type="InterPro" id="IPR029034">
    <property type="entry name" value="Cystine-knot_cytokine"/>
</dbReference>
<dbReference type="InterPro" id="IPR001839">
    <property type="entry name" value="TGF-b_C"/>
</dbReference>
<dbReference type="InterPro" id="IPR016319">
    <property type="entry name" value="TGF-beta"/>
</dbReference>
<dbReference type="InterPro" id="IPR015615">
    <property type="entry name" value="TGF-beta-rel"/>
</dbReference>
<dbReference type="InterPro" id="IPR017948">
    <property type="entry name" value="TGFb_CS"/>
</dbReference>
<dbReference type="PANTHER" id="PTHR11848:SF303">
    <property type="entry name" value="DAUER LARVA DEVELOPMENT REGULATORY GROWTH FACTOR DAF-7"/>
    <property type="match status" value="1"/>
</dbReference>
<dbReference type="PANTHER" id="PTHR11848">
    <property type="entry name" value="TGF-BETA FAMILY"/>
    <property type="match status" value="1"/>
</dbReference>
<dbReference type="Pfam" id="PF00019">
    <property type="entry name" value="TGF_beta"/>
    <property type="match status" value="1"/>
</dbReference>
<dbReference type="PIRSF" id="PIRSF001787">
    <property type="entry name" value="TGF-beta"/>
    <property type="match status" value="1"/>
</dbReference>
<dbReference type="SMART" id="SM00204">
    <property type="entry name" value="TGFB"/>
    <property type="match status" value="1"/>
</dbReference>
<dbReference type="SUPFAM" id="SSF57501">
    <property type="entry name" value="Cystine-knot cytokines"/>
    <property type="match status" value="1"/>
</dbReference>
<dbReference type="PROSITE" id="PS00250">
    <property type="entry name" value="TGF_BETA_1"/>
    <property type="match status" value="1"/>
</dbReference>
<dbReference type="PROSITE" id="PS51362">
    <property type="entry name" value="TGF_BETA_2"/>
    <property type="match status" value="1"/>
</dbReference>
<proteinExistence type="evidence at protein level"/>